<sequence>MENLHKRILEEGQALSNDVLKVDSFLNHQVDADLMYEMGTYFKNYFKDHNITKIFTIESSGIAPTVMTAMQMNLPMVILKKQGSKILKGDVYQTTVHSFTKGTDYELTLQKKYINEDDNILIIDDFLANGEAALGAARLVEGAGAKVAGIGIVIEKSFQPGPKLLEEKGYDVYSLARIEKLEKGIIKIKK</sequence>
<dbReference type="EC" id="2.4.2.22" evidence="1"/>
<dbReference type="EMBL" id="CP001056">
    <property type="protein sequence ID" value="ACD21764.1"/>
    <property type="molecule type" value="Genomic_DNA"/>
</dbReference>
<dbReference type="SMR" id="B2TL11"/>
<dbReference type="KEGG" id="cbk:CLL_A1697"/>
<dbReference type="PATRIC" id="fig|935198.13.peg.1644"/>
<dbReference type="HOGENOM" id="CLU_099015_0_0_9"/>
<dbReference type="UniPathway" id="UPA00602">
    <property type="reaction ID" value="UER00658"/>
</dbReference>
<dbReference type="Proteomes" id="UP000001195">
    <property type="component" value="Chromosome"/>
</dbReference>
<dbReference type="GO" id="GO:0005737">
    <property type="term" value="C:cytoplasm"/>
    <property type="evidence" value="ECO:0007669"/>
    <property type="project" value="UniProtKB-SubCell"/>
</dbReference>
<dbReference type="GO" id="GO:0000310">
    <property type="term" value="F:xanthine phosphoribosyltransferase activity"/>
    <property type="evidence" value="ECO:0007669"/>
    <property type="project" value="UniProtKB-UniRule"/>
</dbReference>
<dbReference type="GO" id="GO:0006166">
    <property type="term" value="P:purine ribonucleoside salvage"/>
    <property type="evidence" value="ECO:0007669"/>
    <property type="project" value="UniProtKB-KW"/>
</dbReference>
<dbReference type="GO" id="GO:0046110">
    <property type="term" value="P:xanthine metabolic process"/>
    <property type="evidence" value="ECO:0007669"/>
    <property type="project" value="InterPro"/>
</dbReference>
<dbReference type="GO" id="GO:0032265">
    <property type="term" value="P:XMP salvage"/>
    <property type="evidence" value="ECO:0007669"/>
    <property type="project" value="UniProtKB-UniRule"/>
</dbReference>
<dbReference type="CDD" id="cd06223">
    <property type="entry name" value="PRTases_typeI"/>
    <property type="match status" value="1"/>
</dbReference>
<dbReference type="Gene3D" id="3.40.50.2020">
    <property type="match status" value="1"/>
</dbReference>
<dbReference type="HAMAP" id="MF_01184">
    <property type="entry name" value="XPRTase"/>
    <property type="match status" value="1"/>
</dbReference>
<dbReference type="InterPro" id="IPR000836">
    <property type="entry name" value="PRibTrfase_dom"/>
</dbReference>
<dbReference type="InterPro" id="IPR029057">
    <property type="entry name" value="PRTase-like"/>
</dbReference>
<dbReference type="InterPro" id="IPR050118">
    <property type="entry name" value="Pur/Pyrimidine_PRTase"/>
</dbReference>
<dbReference type="InterPro" id="IPR010079">
    <property type="entry name" value="Xanthine_PRibTrfase"/>
</dbReference>
<dbReference type="NCBIfam" id="NF006671">
    <property type="entry name" value="PRK09219.1"/>
    <property type="match status" value="1"/>
</dbReference>
<dbReference type="NCBIfam" id="TIGR01744">
    <property type="entry name" value="XPRTase"/>
    <property type="match status" value="1"/>
</dbReference>
<dbReference type="PANTHER" id="PTHR43864">
    <property type="entry name" value="HYPOXANTHINE/GUANINE PHOSPHORIBOSYLTRANSFERASE"/>
    <property type="match status" value="1"/>
</dbReference>
<dbReference type="PANTHER" id="PTHR43864:SF1">
    <property type="entry name" value="XANTHINE PHOSPHORIBOSYLTRANSFERASE"/>
    <property type="match status" value="1"/>
</dbReference>
<dbReference type="Pfam" id="PF00156">
    <property type="entry name" value="Pribosyltran"/>
    <property type="match status" value="1"/>
</dbReference>
<dbReference type="SUPFAM" id="SSF53271">
    <property type="entry name" value="PRTase-like"/>
    <property type="match status" value="1"/>
</dbReference>
<organism>
    <name type="scientific">Clostridium botulinum (strain Eklund 17B / Type B)</name>
    <dbReference type="NCBI Taxonomy" id="935198"/>
    <lineage>
        <taxon>Bacteria</taxon>
        <taxon>Bacillati</taxon>
        <taxon>Bacillota</taxon>
        <taxon>Clostridia</taxon>
        <taxon>Eubacteriales</taxon>
        <taxon>Clostridiaceae</taxon>
        <taxon>Clostridium</taxon>
    </lineage>
</organism>
<keyword id="KW-0963">Cytoplasm</keyword>
<keyword id="KW-0328">Glycosyltransferase</keyword>
<keyword id="KW-0660">Purine salvage</keyword>
<keyword id="KW-0808">Transferase</keyword>
<proteinExistence type="inferred from homology"/>
<protein>
    <recommendedName>
        <fullName evidence="1">Xanthine phosphoribosyltransferase</fullName>
        <shortName evidence="1">XPRTase</shortName>
        <ecNumber evidence="1">2.4.2.22</ecNumber>
    </recommendedName>
</protein>
<evidence type="ECO:0000255" key="1">
    <source>
        <dbReference type="HAMAP-Rule" id="MF_01184"/>
    </source>
</evidence>
<comment type="function">
    <text evidence="1">Converts the preformed base xanthine, a product of nucleic acid breakdown, to xanthosine 5'-monophosphate (XMP), so it can be reused for RNA or DNA synthesis.</text>
</comment>
<comment type="catalytic activity">
    <reaction evidence="1">
        <text>XMP + diphosphate = xanthine + 5-phospho-alpha-D-ribose 1-diphosphate</text>
        <dbReference type="Rhea" id="RHEA:10800"/>
        <dbReference type="ChEBI" id="CHEBI:17712"/>
        <dbReference type="ChEBI" id="CHEBI:33019"/>
        <dbReference type="ChEBI" id="CHEBI:57464"/>
        <dbReference type="ChEBI" id="CHEBI:58017"/>
        <dbReference type="EC" id="2.4.2.22"/>
    </reaction>
</comment>
<comment type="pathway">
    <text evidence="1">Purine metabolism; XMP biosynthesis via salvage pathway; XMP from xanthine: step 1/1.</text>
</comment>
<comment type="subunit">
    <text evidence="1">Homodimer.</text>
</comment>
<comment type="subcellular location">
    <subcellularLocation>
        <location evidence="1">Cytoplasm</location>
    </subcellularLocation>
</comment>
<comment type="similarity">
    <text evidence="1">Belongs to the purine/pyrimidine phosphoribosyltransferase family. Xpt subfamily.</text>
</comment>
<feature type="chain" id="PRO_1000138236" description="Xanthine phosphoribosyltransferase">
    <location>
        <begin position="1"/>
        <end position="190"/>
    </location>
</feature>
<feature type="binding site" evidence="1">
    <location>
        <position position="20"/>
    </location>
    <ligand>
        <name>xanthine</name>
        <dbReference type="ChEBI" id="CHEBI:17712"/>
    </ligand>
</feature>
<feature type="binding site" evidence="1">
    <location>
        <position position="27"/>
    </location>
    <ligand>
        <name>xanthine</name>
        <dbReference type="ChEBI" id="CHEBI:17712"/>
    </ligand>
</feature>
<feature type="binding site" evidence="1">
    <location>
        <begin position="128"/>
        <end position="132"/>
    </location>
    <ligand>
        <name>5-phospho-alpha-D-ribose 1-diphosphate</name>
        <dbReference type="ChEBI" id="CHEBI:58017"/>
    </ligand>
</feature>
<feature type="binding site" evidence="1">
    <location>
        <position position="156"/>
    </location>
    <ligand>
        <name>xanthine</name>
        <dbReference type="ChEBI" id="CHEBI:17712"/>
    </ligand>
</feature>
<reference key="1">
    <citation type="submission" date="2008-04" db="EMBL/GenBank/DDBJ databases">
        <title>Complete sequence of Clostridium botulinum strain Eklund.</title>
        <authorList>
            <person name="Brinkac L.M."/>
            <person name="Brown J.L."/>
            <person name="Bruce D."/>
            <person name="Detter C."/>
            <person name="Munk C."/>
            <person name="Smith L.A."/>
            <person name="Smith T.J."/>
            <person name="Sutton G."/>
            <person name="Brettin T.S."/>
        </authorList>
    </citation>
    <scope>NUCLEOTIDE SEQUENCE [LARGE SCALE GENOMIC DNA]</scope>
    <source>
        <strain>Eklund 17B / Type B</strain>
    </source>
</reference>
<name>XPT_CLOBB</name>
<gene>
    <name evidence="1" type="primary">xpt</name>
    <name type="ordered locus">CLL_A1697</name>
</gene>
<accession>B2TL11</accession>